<name>RAD5_YEAST</name>
<accession>P32849</accession>
<accession>D6VY34</accession>
<keyword id="KW-0002">3D-structure</keyword>
<keyword id="KW-0007">Acetylation</keyword>
<keyword id="KW-0067">ATP-binding</keyword>
<keyword id="KW-0963">Cytoplasm</keyword>
<keyword id="KW-0227">DNA damage</keyword>
<keyword id="KW-0234">DNA repair</keyword>
<keyword id="KW-0238">DNA-binding</keyword>
<keyword id="KW-0347">Helicase</keyword>
<keyword id="KW-0378">Hydrolase</keyword>
<keyword id="KW-0479">Metal-binding</keyword>
<keyword id="KW-0547">Nucleotide-binding</keyword>
<keyword id="KW-0539">Nucleus</keyword>
<keyword id="KW-0597">Phosphoprotein</keyword>
<keyword id="KW-1185">Reference proteome</keyword>
<keyword id="KW-0862">Zinc</keyword>
<keyword id="KW-0863">Zinc-finger</keyword>
<comment type="function">
    <text evidence="5 6 7 8 9 10 12 13">Probable helicase, member of the UBC2/RAD6 epistasis group. Functions with the DNA repair protein RAD18 in error-free postreplication DNA repair. Involved in the maintenance of wild-type rates of instability of simple repetitive sequences such as poly(GT) repeats. Seems to be involved in maintaining a balance which acts in favor of error-prone non-homologous joining during DNA double-strand breaks repairs. Recruits the UBC13-MMS2 dimer to chromatin for DNA repair.</text>
</comment>
<comment type="cofactor">
    <cofactor>
        <name>Mg(2+)</name>
        <dbReference type="ChEBI" id="CHEBI:18420"/>
    </cofactor>
    <cofactor>
        <name>Mn(2+)</name>
        <dbReference type="ChEBI" id="CHEBI:29035"/>
    </cofactor>
    <cofactor>
        <name>Ca(2+)</name>
        <dbReference type="ChEBI" id="CHEBI:29108"/>
    </cofactor>
</comment>
<comment type="biophysicochemical properties">
    <kinetics>
        <KM>525 uM for ATP</KM>
    </kinetics>
    <phDependence>
        <text>Optimum pH is 7.0. for ATPase activity.</text>
    </phDependence>
</comment>
<comment type="subunit">
    <text evidence="5 8 9 12">Homodimer. Interacts with POL30, RAD18, UBC9 and UBC13.</text>
</comment>
<comment type="subcellular location">
    <subcellularLocation>
        <location>Cytoplasm</location>
    </subcellularLocation>
    <subcellularLocation>
        <location>Nucleus</location>
    </subcellularLocation>
</comment>
<comment type="miscellaneous">
    <text evidence="11">Present with 1520 molecules/cell in log phase SD medium.</text>
</comment>
<comment type="similarity">
    <text evidence="14">Belongs to the SNF2/RAD54 helicase family.</text>
</comment>
<reference key="1">
    <citation type="journal article" date="1992" name="Mol. Cell. Biol.">
        <title>Saccharomyces cerevisiae RAD5-encoded DNA repair protein contains DNA helicase and zinc-binding sequence motifs and affects the stability of simple repetitive sequences in the genome.</title>
        <authorList>
            <person name="Johnson R.E."/>
            <person name="Henderson S.T."/>
            <person name="Petes T.D."/>
            <person name="Prakash S."/>
            <person name="Bankmann M."/>
            <person name="Prakash L."/>
        </authorList>
    </citation>
    <scope>NUCLEOTIDE SEQUENCE [GENOMIC DNA]</scope>
    <scope>FUNCTION</scope>
</reference>
<reference key="2">
    <citation type="journal article" date="1997" name="Nature">
        <title>The nucleotide sequence of Saccharomyces cerevisiae chromosome XII.</title>
        <authorList>
            <person name="Johnston M."/>
            <person name="Hillier L.W."/>
            <person name="Riles L."/>
            <person name="Albermann K."/>
            <person name="Andre B."/>
            <person name="Ansorge W."/>
            <person name="Benes V."/>
            <person name="Brueckner M."/>
            <person name="Delius H."/>
            <person name="Dubois E."/>
            <person name="Duesterhoeft A."/>
            <person name="Entian K.-D."/>
            <person name="Floeth M."/>
            <person name="Goffeau A."/>
            <person name="Hebling U."/>
            <person name="Heumann K."/>
            <person name="Heuss-Neitzel D."/>
            <person name="Hilbert H."/>
            <person name="Hilger F."/>
            <person name="Kleine K."/>
            <person name="Koetter P."/>
            <person name="Louis E.J."/>
            <person name="Messenguy F."/>
            <person name="Mewes H.-W."/>
            <person name="Miosga T."/>
            <person name="Moestl D."/>
            <person name="Mueller-Auer S."/>
            <person name="Nentwich U."/>
            <person name="Obermaier B."/>
            <person name="Piravandi E."/>
            <person name="Pohl T.M."/>
            <person name="Portetelle D."/>
            <person name="Purnelle B."/>
            <person name="Rechmann S."/>
            <person name="Rieger M."/>
            <person name="Rinke M."/>
            <person name="Rose M."/>
            <person name="Scharfe M."/>
            <person name="Scherens B."/>
            <person name="Scholler P."/>
            <person name="Schwager C."/>
            <person name="Schwarz S."/>
            <person name="Underwood A.P."/>
            <person name="Urrestarazu L.A."/>
            <person name="Vandenbol M."/>
            <person name="Verhasselt P."/>
            <person name="Vierendeels F."/>
            <person name="Voet M."/>
            <person name="Volckaert G."/>
            <person name="Voss H."/>
            <person name="Wambutt R."/>
            <person name="Wedler E."/>
            <person name="Wedler H."/>
            <person name="Zimmermann F.K."/>
            <person name="Zollner A."/>
            <person name="Hani J."/>
            <person name="Hoheisel J.D."/>
        </authorList>
    </citation>
    <scope>NUCLEOTIDE SEQUENCE [LARGE SCALE GENOMIC DNA]</scope>
    <source>
        <strain>ATCC 204508 / S288c</strain>
    </source>
</reference>
<reference key="3">
    <citation type="journal article" date="2014" name="G3 (Bethesda)">
        <title>The reference genome sequence of Saccharomyces cerevisiae: Then and now.</title>
        <authorList>
            <person name="Engel S.R."/>
            <person name="Dietrich F.S."/>
            <person name="Fisk D.G."/>
            <person name="Binkley G."/>
            <person name="Balakrishnan R."/>
            <person name="Costanzo M.C."/>
            <person name="Dwight S.S."/>
            <person name="Hitz B.C."/>
            <person name="Karra K."/>
            <person name="Nash R.S."/>
            <person name="Weng S."/>
            <person name="Wong E.D."/>
            <person name="Lloyd P."/>
            <person name="Skrzypek M.S."/>
            <person name="Miyasato S.R."/>
            <person name="Simison M."/>
            <person name="Cherry J.M."/>
        </authorList>
    </citation>
    <scope>GENOME REANNOTATION</scope>
    <source>
        <strain>ATCC 204508 / S288c</strain>
    </source>
</reference>
<reference key="4">
    <citation type="journal article" date="1992" name="Curr. Genet.">
        <title>The REV2 gene of Saccharomyces cerevisiae: cloning and DNA sequence.</title>
        <authorList>
            <person name="Ahne F."/>
            <person name="Baur M."/>
            <person name="Eckardt-Schupp F."/>
        </authorList>
    </citation>
    <scope>NUCLEOTIDE SEQUENCE [GENOMIC DNA] OF 402-1063</scope>
</reference>
<reference key="5">
    <citation type="journal article" date="1994" name="J. Biol. Chem.">
        <title>Yeast DNA repair protein RAD5 that promotes instability of simple repetitive sequences is a DNA-dependent ATPase.</title>
        <authorList>
            <person name="Johnson R.E."/>
            <person name="Prakash S."/>
            <person name="Prakash L."/>
        </authorList>
    </citation>
    <scope>CHARACTERIZATION</scope>
</reference>
<reference key="6">
    <citation type="journal article" date="1997" name="Nucleic Acids Res.">
        <title>The RAD5 gene product is involved in the avoidance of non-homologous end-joining of DNA double strand breaks in the yeast Saccharomyces cerevisiae.</title>
        <authorList>
            <person name="Ahne F."/>
            <person name="Ja B."/>
            <person name="Eckardt-Schupp F."/>
        </authorList>
    </citation>
    <scope>FUNCTION</scope>
</reference>
<reference key="7">
    <citation type="journal article" date="2000" name="EMBO J.">
        <title>Two RING finger proteins mediate cooperation between ubiquitin-conjugating enzymes in DNA repair.</title>
        <authorList>
            <person name="Ulrich H.D."/>
            <person name="Jentsch S."/>
        </authorList>
    </citation>
    <scope>FUNCTION</scope>
    <scope>SUBCELLULAR LOCATION</scope>
    <scope>MUTAGENESIS OF CYS-914</scope>
    <scope>SUBUNIT</scope>
    <scope>INTERACTION WITH RAD18 AND UBC13</scope>
</reference>
<reference key="8">
    <citation type="journal article" date="2000" name="Genetics">
        <title>The Saccharomyces cerevisiae RAD6 group is composed of an error-prone and two error-free postreplication repair pathways.</title>
        <authorList>
            <person name="Xiao W."/>
            <person name="Chow B.L."/>
            <person name="Broomfield S."/>
            <person name="Hanna M."/>
        </authorList>
    </citation>
    <scope>FUNCTION</scope>
</reference>
<reference key="9">
    <citation type="journal article" date="2002" name="Mol. Cell. Biol.">
        <title>Requirement of RAD5 and MMS2 for postreplication repair of UV-damaged DNA in Saccharomyces cerevisiae.</title>
        <authorList>
            <person name="Torres-Ramos C.A."/>
            <person name="Prakash S."/>
            <person name="Prakash L."/>
        </authorList>
    </citation>
    <scope>FUNCTION</scope>
</reference>
<reference key="10">
    <citation type="journal article" date="2002" name="Nature">
        <title>RAD6-dependent DNA repair is linked to modification of PCNA by ubiquitin and SUMO.</title>
        <authorList>
            <person name="Hoege C."/>
            <person name="Pfander B."/>
            <person name="Moldovan G.-L."/>
            <person name="Pyrowolakis G."/>
            <person name="Jentsch S."/>
        </authorList>
    </citation>
    <scope>FUNCTION</scope>
    <scope>INTERACTION WITH POL30 AND UBC9</scope>
</reference>
<reference key="11">
    <citation type="journal article" date="2003" name="J. Biol. Chem.">
        <title>Protein-protein interactions within an E2-RING finger complex. Implications for ubiquitin-dependent DNA damage repair.</title>
        <authorList>
            <person name="Ulrich H.D."/>
        </authorList>
    </citation>
    <scope>FUNCTION</scope>
    <scope>SUBUNIT</scope>
    <scope>INTERACTION WITH UBC13</scope>
    <scope>MUTAGENESIS OF CYS-914; ILE-916; TYR-944 AND ASN-959</scope>
</reference>
<reference key="12">
    <citation type="journal article" date="2003" name="Nature">
        <title>Global analysis of protein localization in budding yeast.</title>
        <authorList>
            <person name="Huh W.-K."/>
            <person name="Falvo J.V."/>
            <person name="Gerke L.C."/>
            <person name="Carroll A.S."/>
            <person name="Howson R.W."/>
            <person name="Weissman J.S."/>
            <person name="O'Shea E.K."/>
        </authorList>
    </citation>
    <scope>SUBCELLULAR LOCATION [LARGE SCALE ANALYSIS]</scope>
</reference>
<reference key="13">
    <citation type="journal article" date="2003" name="Nature">
        <title>Global analysis of protein expression in yeast.</title>
        <authorList>
            <person name="Ghaemmaghami S."/>
            <person name="Huh W.-K."/>
            <person name="Bower K."/>
            <person name="Howson R.W."/>
            <person name="Belle A."/>
            <person name="Dephoure N."/>
            <person name="O'Shea E.K."/>
            <person name="Weissman J.S."/>
        </authorList>
    </citation>
    <scope>LEVEL OF PROTEIN EXPRESSION [LARGE SCALE ANALYSIS]</scope>
</reference>
<reference key="14">
    <citation type="journal article" date="2005" name="Nucleic Acids Res.">
        <title>The RING finger ATPase Rad5p of Saccharomyces cerevisiae contributes to DNA double-strand break repair in a ubiquitin-independent manner.</title>
        <authorList>
            <person name="Chen S."/>
            <person name="Davies A.A."/>
            <person name="Sagan D."/>
            <person name="Ulrich H.D."/>
        </authorList>
    </citation>
    <scope>FUNCTION</scope>
    <scope>INTERACTION WITH POL30; RAD18 AND UBC13</scope>
    <scope>MUTAGENESIS OF 538-LYS-THR-539</scope>
</reference>
<reference key="15">
    <citation type="journal article" date="2008" name="Mol. Cell. Proteomics">
        <title>A multidimensional chromatography technology for in-depth phosphoproteome analysis.</title>
        <authorList>
            <person name="Albuquerque C.P."/>
            <person name="Smolka M.B."/>
            <person name="Payne S.H."/>
            <person name="Bafna V."/>
            <person name="Eng J."/>
            <person name="Zhou H."/>
        </authorList>
    </citation>
    <scope>IDENTIFICATION BY MASS SPECTROMETRY [LARGE SCALE ANALYSIS]</scope>
</reference>
<reference key="16">
    <citation type="journal article" date="2009" name="Science">
        <title>Global analysis of Cdk1 substrate phosphorylation sites provides insights into evolution.</title>
        <authorList>
            <person name="Holt L.J."/>
            <person name="Tuch B.B."/>
            <person name="Villen J."/>
            <person name="Johnson A.D."/>
            <person name="Gygi S.P."/>
            <person name="Morgan D.O."/>
        </authorList>
    </citation>
    <scope>PHOSPHORYLATION [LARGE SCALE ANALYSIS] AT SER-20; SER-23; SER-129 AND SER-130</scope>
    <scope>IDENTIFICATION BY MASS SPECTROMETRY [LARGE SCALE ANALYSIS]</scope>
</reference>
<reference key="17">
    <citation type="journal article" date="2012" name="Proc. Natl. Acad. Sci. U.S.A.">
        <title>N-terminal acetylome analyses and functional insights of the N-terminal acetyltransferase NatB.</title>
        <authorList>
            <person name="Van Damme P."/>
            <person name="Lasa M."/>
            <person name="Polevoda B."/>
            <person name="Gazquez C."/>
            <person name="Elosegui-Artola A."/>
            <person name="Kim D.S."/>
            <person name="De Juan-Pardo E."/>
            <person name="Demeyer K."/>
            <person name="Hole K."/>
            <person name="Larrea E."/>
            <person name="Timmerman E."/>
            <person name="Prieto J."/>
            <person name="Arnesen T."/>
            <person name="Sherman F."/>
            <person name="Gevaert K."/>
            <person name="Aldabe R."/>
        </authorList>
    </citation>
    <scope>ACETYLATION [LARGE SCALE ANALYSIS] AT SER-2</scope>
    <scope>CLEAVAGE OF INITIATOR METHIONINE [LARGE SCALE ANALYSIS]</scope>
    <scope>IDENTIFICATION BY MASS SPECTROMETRY [LARGE SCALE ANALYSIS]</scope>
</reference>
<dbReference type="EC" id="3.6.4.-"/>
<dbReference type="EMBL" id="M96644">
    <property type="protein sequence ID" value="AAA34951.1"/>
    <property type="molecule type" value="Genomic_DNA"/>
</dbReference>
<dbReference type="EMBL" id="Z73204">
    <property type="protein sequence ID" value="CAA97556.1"/>
    <property type="molecule type" value="Genomic_DNA"/>
</dbReference>
<dbReference type="EMBL" id="S46103">
    <property type="protein sequence ID" value="AAB23590.1"/>
    <property type="molecule type" value="Genomic_DNA"/>
</dbReference>
<dbReference type="EMBL" id="BK006945">
    <property type="protein sequence ID" value="DAA09350.1"/>
    <property type="molecule type" value="Genomic_DNA"/>
</dbReference>
<dbReference type="PIR" id="S64859">
    <property type="entry name" value="S64859"/>
</dbReference>
<dbReference type="RefSeq" id="NP_013132.1">
    <property type="nucleotide sequence ID" value="NM_001181919.1"/>
</dbReference>
<dbReference type="PDB" id="5YRQ">
    <property type="method" value="X-ray"/>
    <property type="resolution" value="2.00 A"/>
    <property type="chains" value="A/B/D/E=5-20"/>
</dbReference>
<dbReference type="PDBsum" id="5YRQ"/>
<dbReference type="SASBDB" id="P32849"/>
<dbReference type="SMR" id="P32849"/>
<dbReference type="BioGRID" id="31306">
    <property type="interactions" value="372"/>
</dbReference>
<dbReference type="DIP" id="DIP-5830N"/>
<dbReference type="FunCoup" id="P32849">
    <property type="interactions" value="1226"/>
</dbReference>
<dbReference type="IntAct" id="P32849">
    <property type="interactions" value="8"/>
</dbReference>
<dbReference type="MINT" id="P32849"/>
<dbReference type="STRING" id="4932.YLR032W"/>
<dbReference type="iPTMnet" id="P32849"/>
<dbReference type="PaxDb" id="4932-YLR032W"/>
<dbReference type="PeptideAtlas" id="P32849"/>
<dbReference type="EnsemblFungi" id="YLR032W_mRNA">
    <property type="protein sequence ID" value="YLR032W"/>
    <property type="gene ID" value="YLR032W"/>
</dbReference>
<dbReference type="GeneID" id="850719"/>
<dbReference type="KEGG" id="sce:YLR032W"/>
<dbReference type="AGR" id="SGD:S000004022"/>
<dbReference type="SGD" id="S000004022">
    <property type="gene designation" value="RAD5"/>
</dbReference>
<dbReference type="VEuPathDB" id="FungiDB:YLR032W"/>
<dbReference type="eggNOG" id="KOG1001">
    <property type="taxonomic scope" value="Eukaryota"/>
</dbReference>
<dbReference type="GeneTree" id="ENSGT00940000165376"/>
<dbReference type="HOGENOM" id="CLU_000315_2_5_1"/>
<dbReference type="InParanoid" id="P32849"/>
<dbReference type="OMA" id="KVEPWSN"/>
<dbReference type="OrthoDB" id="2801544at2759"/>
<dbReference type="BioCyc" id="YEAST:G3O-32191-MONOMER"/>
<dbReference type="BioGRID-ORCS" id="850719">
    <property type="hits" value="8 hits in 10 CRISPR screens"/>
</dbReference>
<dbReference type="PRO" id="PR:P32849"/>
<dbReference type="Proteomes" id="UP000002311">
    <property type="component" value="Chromosome XII"/>
</dbReference>
<dbReference type="RNAct" id="P32849">
    <property type="molecule type" value="protein"/>
</dbReference>
<dbReference type="GO" id="GO:0000785">
    <property type="term" value="C:chromatin"/>
    <property type="evidence" value="ECO:0000314"/>
    <property type="project" value="SGD"/>
</dbReference>
<dbReference type="GO" id="GO:0000781">
    <property type="term" value="C:chromosome, telomeric region"/>
    <property type="evidence" value="ECO:0000314"/>
    <property type="project" value="SGD"/>
</dbReference>
<dbReference type="GO" id="GO:0005737">
    <property type="term" value="C:cytoplasm"/>
    <property type="evidence" value="ECO:0007005"/>
    <property type="project" value="SGD"/>
</dbReference>
<dbReference type="GO" id="GO:0005634">
    <property type="term" value="C:nucleus"/>
    <property type="evidence" value="ECO:0007005"/>
    <property type="project" value="SGD"/>
</dbReference>
<dbReference type="GO" id="GO:0005524">
    <property type="term" value="F:ATP binding"/>
    <property type="evidence" value="ECO:0007669"/>
    <property type="project" value="UniProtKB-KW"/>
</dbReference>
<dbReference type="GO" id="GO:0008094">
    <property type="term" value="F:ATP-dependent activity, acting on DNA"/>
    <property type="evidence" value="ECO:0000314"/>
    <property type="project" value="SGD"/>
</dbReference>
<dbReference type="GO" id="GO:0000400">
    <property type="term" value="F:four-way junction DNA binding"/>
    <property type="evidence" value="ECO:0000314"/>
    <property type="project" value="SGD"/>
</dbReference>
<dbReference type="GO" id="GO:0009378">
    <property type="term" value="F:four-way junction helicase activity"/>
    <property type="evidence" value="ECO:0000314"/>
    <property type="project" value="SGD"/>
</dbReference>
<dbReference type="GO" id="GO:0016818">
    <property type="term" value="F:hydrolase activity, acting on acid anhydrides, in phosphorus-containing anhydrides"/>
    <property type="evidence" value="ECO:0007669"/>
    <property type="project" value="InterPro"/>
</dbReference>
<dbReference type="GO" id="GO:0000403">
    <property type="term" value="F:Y-form DNA binding"/>
    <property type="evidence" value="ECO:0000314"/>
    <property type="project" value="SGD"/>
</dbReference>
<dbReference type="GO" id="GO:0008270">
    <property type="term" value="F:zinc ion binding"/>
    <property type="evidence" value="ECO:0007669"/>
    <property type="project" value="UniProtKB-KW"/>
</dbReference>
<dbReference type="GO" id="GO:0006281">
    <property type="term" value="P:DNA repair"/>
    <property type="evidence" value="ECO:0000318"/>
    <property type="project" value="GO_Central"/>
</dbReference>
<dbReference type="GO" id="GO:0006302">
    <property type="term" value="P:double-strand break repair"/>
    <property type="evidence" value="ECO:0000315"/>
    <property type="project" value="SGD"/>
</dbReference>
<dbReference type="GO" id="GO:0042275">
    <property type="term" value="P:error-free postreplication DNA repair"/>
    <property type="evidence" value="ECO:0000315"/>
    <property type="project" value="SGD"/>
</dbReference>
<dbReference type="GO" id="GO:0070987">
    <property type="term" value="P:error-free translesion synthesis"/>
    <property type="evidence" value="ECO:0000314"/>
    <property type="project" value="SGD"/>
</dbReference>
<dbReference type="GO" id="GO:0042276">
    <property type="term" value="P:error-prone translesion synthesis"/>
    <property type="evidence" value="ECO:0000314"/>
    <property type="project" value="SGD"/>
</dbReference>
<dbReference type="GO" id="GO:0010994">
    <property type="term" value="P:free ubiquitin chain polymerization"/>
    <property type="evidence" value="ECO:0000314"/>
    <property type="project" value="SGD"/>
</dbReference>
<dbReference type="GO" id="GO:0006301">
    <property type="term" value="P:postreplication repair"/>
    <property type="evidence" value="ECO:0000314"/>
    <property type="project" value="SGD"/>
</dbReference>
<dbReference type="GO" id="GO:0000209">
    <property type="term" value="P:protein polyubiquitination"/>
    <property type="evidence" value="ECO:0000314"/>
    <property type="project" value="SGD"/>
</dbReference>
<dbReference type="CDD" id="cd18008">
    <property type="entry name" value="DEXDc_SHPRH-like"/>
    <property type="match status" value="1"/>
</dbReference>
<dbReference type="CDD" id="cd23131">
    <property type="entry name" value="RING-HC_RAD5"/>
    <property type="match status" value="1"/>
</dbReference>
<dbReference type="CDD" id="cd18793">
    <property type="entry name" value="SF2_C_SNF"/>
    <property type="match status" value="1"/>
</dbReference>
<dbReference type="FunFam" id="1.20.120.850:FF:000015">
    <property type="entry name" value="Rad5p"/>
    <property type="match status" value="1"/>
</dbReference>
<dbReference type="FunFam" id="3.40.50.300:FF:002659">
    <property type="entry name" value="Rad5p"/>
    <property type="match status" value="1"/>
</dbReference>
<dbReference type="Gene3D" id="3.40.50.300">
    <property type="entry name" value="P-loop containing nucleotide triphosphate hydrolases"/>
    <property type="match status" value="1"/>
</dbReference>
<dbReference type="Gene3D" id="1.20.120.850">
    <property type="entry name" value="SWI2/SNF2 ATPases, N-terminal domain"/>
    <property type="match status" value="1"/>
</dbReference>
<dbReference type="Gene3D" id="3.40.50.10810">
    <property type="entry name" value="Tandem AAA-ATPase domain"/>
    <property type="match status" value="1"/>
</dbReference>
<dbReference type="Gene3D" id="3.30.40.10">
    <property type="entry name" value="Zinc/RING finger domain, C3HC4 (zinc finger)"/>
    <property type="match status" value="1"/>
</dbReference>
<dbReference type="InterPro" id="IPR014001">
    <property type="entry name" value="Helicase_ATP-bd"/>
</dbReference>
<dbReference type="InterPro" id="IPR001650">
    <property type="entry name" value="Helicase_C-like"/>
</dbReference>
<dbReference type="InterPro" id="IPR014905">
    <property type="entry name" value="HIRAN"/>
</dbReference>
<dbReference type="InterPro" id="IPR027417">
    <property type="entry name" value="P-loop_NTPase"/>
</dbReference>
<dbReference type="InterPro" id="IPR038718">
    <property type="entry name" value="SNF2-like_sf"/>
</dbReference>
<dbReference type="InterPro" id="IPR049730">
    <property type="entry name" value="SNF2/RAD54-like_C"/>
</dbReference>
<dbReference type="InterPro" id="IPR000330">
    <property type="entry name" value="SNF2_N"/>
</dbReference>
<dbReference type="InterPro" id="IPR050628">
    <property type="entry name" value="SNF2_RAD54_helicase_TF"/>
</dbReference>
<dbReference type="InterPro" id="IPR018957">
    <property type="entry name" value="Znf_C3HC4_RING-type"/>
</dbReference>
<dbReference type="InterPro" id="IPR001841">
    <property type="entry name" value="Znf_RING"/>
</dbReference>
<dbReference type="InterPro" id="IPR013083">
    <property type="entry name" value="Znf_RING/FYVE/PHD"/>
</dbReference>
<dbReference type="InterPro" id="IPR017907">
    <property type="entry name" value="Znf_RING_CS"/>
</dbReference>
<dbReference type="PANTHER" id="PTHR45626:SF22">
    <property type="entry name" value="DNA REPAIR PROTEIN RAD5"/>
    <property type="match status" value="1"/>
</dbReference>
<dbReference type="PANTHER" id="PTHR45626">
    <property type="entry name" value="TRANSCRIPTION TERMINATION FACTOR 2-RELATED"/>
    <property type="match status" value="1"/>
</dbReference>
<dbReference type="Pfam" id="PF00271">
    <property type="entry name" value="Helicase_C"/>
    <property type="match status" value="1"/>
</dbReference>
<dbReference type="Pfam" id="PF08797">
    <property type="entry name" value="HIRAN"/>
    <property type="match status" value="1"/>
</dbReference>
<dbReference type="Pfam" id="PF00176">
    <property type="entry name" value="SNF2-rel_dom"/>
    <property type="match status" value="1"/>
</dbReference>
<dbReference type="Pfam" id="PF00097">
    <property type="entry name" value="zf-C3HC4"/>
    <property type="match status" value="1"/>
</dbReference>
<dbReference type="SMART" id="SM00487">
    <property type="entry name" value="DEXDc"/>
    <property type="match status" value="1"/>
</dbReference>
<dbReference type="SMART" id="SM00490">
    <property type="entry name" value="HELICc"/>
    <property type="match status" value="1"/>
</dbReference>
<dbReference type="SMART" id="SM00910">
    <property type="entry name" value="HIRAN"/>
    <property type="match status" value="1"/>
</dbReference>
<dbReference type="SMART" id="SM00184">
    <property type="entry name" value="RING"/>
    <property type="match status" value="1"/>
</dbReference>
<dbReference type="SUPFAM" id="SSF52540">
    <property type="entry name" value="P-loop containing nucleoside triphosphate hydrolases"/>
    <property type="match status" value="2"/>
</dbReference>
<dbReference type="SUPFAM" id="SSF57850">
    <property type="entry name" value="RING/U-box"/>
    <property type="match status" value="1"/>
</dbReference>
<dbReference type="PROSITE" id="PS51192">
    <property type="entry name" value="HELICASE_ATP_BIND_1"/>
    <property type="match status" value="1"/>
</dbReference>
<dbReference type="PROSITE" id="PS51194">
    <property type="entry name" value="HELICASE_CTER"/>
    <property type="match status" value="1"/>
</dbReference>
<dbReference type="PROSITE" id="PS00518">
    <property type="entry name" value="ZF_RING_1"/>
    <property type="match status" value="1"/>
</dbReference>
<dbReference type="PROSITE" id="PS50089">
    <property type="entry name" value="ZF_RING_2"/>
    <property type="match status" value="1"/>
</dbReference>
<sequence length="1169" mass="134002">MSHIEQEERKRFFNDDLDTSETSLNFKSENKESFLFANSHNDDDDDVVVSVSDTTEGEGDRSIVPVRREIEEEGQNQFITELLRIIPEMPKDLVMELNEKFGSQEEGLSLALSHYFDHNSGTSISKIPSSPNQLNTLSDTSNSTLSPSSFHPKRRRIYGFRNQTRLEDKVTWKRFIGALQVTGMATRPTVRPLKYGSQMKLKRSSEEISATKVYDSRGRKKASMASLVRIFDIQYDREIGRVSEDIAQILYPLLSSHEISFEVTLIFCDNKRLSIGDSFILQLDCFLTSLIFEERNDGESLMKRRRTEGGNKREKDNGNFGRTLTETDEELESRSKRLALLKLFDKLRLKPILDEQKALEKHKIELNSDPEIIDLDNDEICSNQVTEVHNNLRDTQHEEETMNLNQLKTFYKAAQSSESLKSLPETEPSRDVFKLELRNYQKQGLTWMLRREQEFAKAASDGEASETGANMINPLWKQFKWPNDMSWAAQNLQQDHVNVEDGIFFYANLHSGEFSLAKPILKTMIKGGILSDEMGLGKTVAAYSLVLSCPHDSDVVDKKLFDIENTAVSDNLPSTWQDNKKPYASKTTLIVVPMSLLTQWSNEFTKANNSPDMYHEVYYGGNVSSLKTLLTKTKTPPTVVLTTYGIVQNEWTKHSKGRMTDEDVNISSGLFSVNFYRIIIDEGHNIRNRTTVTSKAVMALQGKCKWVLTGTPIINRLDDLYSLVKFLELDPWRQINYWKTFVSTPFESKNYKQAFDVVNAILEPVLLRRTKQMKDKDGKPLVELPPKEVVIKRLPFSKSQDLLYKFLLDKAEVSVKSGIARGDLLKKYSTILVHILRLRQVCCHPGLIGSQDENDEDLSKNNKLVTEQTVELDSLMRVVSERFDNSFSKEELDAMIQRLKVKYPDNKSFQSLECSICTTEPMDLDKALFTECGHSFCEKCLFEYIEFQNSKNLGLKCPNCRNQIDACRLLALVQTNSNSKNLEFKPYSPASKSSKITALLKELQLLQDSSAGEQVVIFSQFSTYLDILEKELTHTFSKDVAKIYKFDGRLSLKERTSVLADFAVKDYSRQKILLLSLKAGGVGLNLTCASHAYMMDPWWSPSMEDQAIDRLHRIGQTNSVKVMRFIIQDSIEEKMLRIQEKKRTIGEAMDTDEDERRKRRIEEIQMLFE</sequence>
<evidence type="ECO:0000255" key="1">
    <source>
        <dbReference type="PROSITE-ProRule" id="PRU00175"/>
    </source>
</evidence>
<evidence type="ECO:0000255" key="2">
    <source>
        <dbReference type="PROSITE-ProRule" id="PRU00541"/>
    </source>
</evidence>
<evidence type="ECO:0000255" key="3">
    <source>
        <dbReference type="PROSITE-ProRule" id="PRU00542"/>
    </source>
</evidence>
<evidence type="ECO:0000256" key="4">
    <source>
        <dbReference type="SAM" id="MobiDB-lite"/>
    </source>
</evidence>
<evidence type="ECO:0000269" key="5">
    <source>
    </source>
</evidence>
<evidence type="ECO:0000269" key="6">
    <source>
    </source>
</evidence>
<evidence type="ECO:0000269" key="7">
    <source>
    </source>
</evidence>
<evidence type="ECO:0000269" key="8">
    <source>
    </source>
</evidence>
<evidence type="ECO:0000269" key="9">
    <source>
    </source>
</evidence>
<evidence type="ECO:0000269" key="10">
    <source>
    </source>
</evidence>
<evidence type="ECO:0000269" key="11">
    <source>
    </source>
</evidence>
<evidence type="ECO:0000269" key="12">
    <source>
    </source>
</evidence>
<evidence type="ECO:0000269" key="13">
    <source>
    </source>
</evidence>
<evidence type="ECO:0000305" key="14"/>
<evidence type="ECO:0007744" key="15">
    <source>
    </source>
</evidence>
<evidence type="ECO:0007744" key="16">
    <source>
    </source>
</evidence>
<evidence type="ECO:0007829" key="17">
    <source>
        <dbReference type="PDB" id="5YRQ"/>
    </source>
</evidence>
<feature type="initiator methionine" description="Removed" evidence="16">
    <location>
        <position position="1"/>
    </location>
</feature>
<feature type="chain" id="PRO_0000056130" description="DNA repair protein RAD5">
    <location>
        <begin position="2"/>
        <end position="1169"/>
    </location>
</feature>
<feature type="domain" description="Helicase ATP-binding" evidence="2">
    <location>
        <begin position="519"/>
        <end position="730"/>
    </location>
</feature>
<feature type="domain" description="Helicase C-terminal" evidence="3">
    <location>
        <begin position="995"/>
        <end position="1165"/>
    </location>
</feature>
<feature type="zinc finger region" description="RING-type" evidence="1">
    <location>
        <begin position="914"/>
        <end position="961"/>
    </location>
</feature>
<feature type="region of interest" description="Disordered" evidence="4">
    <location>
        <begin position="302"/>
        <end position="327"/>
    </location>
</feature>
<feature type="short sequence motif" description="DEGH box">
    <location>
        <begin position="681"/>
        <end position="684"/>
    </location>
</feature>
<feature type="compositionally biased region" description="Basic and acidic residues" evidence="4">
    <location>
        <begin position="302"/>
        <end position="317"/>
    </location>
</feature>
<feature type="binding site" evidence="2">
    <location>
        <begin position="532"/>
        <end position="539"/>
    </location>
    <ligand>
        <name>ATP</name>
        <dbReference type="ChEBI" id="CHEBI:30616"/>
    </ligand>
</feature>
<feature type="modified residue" description="N-acetylserine" evidence="16">
    <location>
        <position position="2"/>
    </location>
</feature>
<feature type="modified residue" description="Phosphoserine" evidence="15">
    <location>
        <position position="20"/>
    </location>
</feature>
<feature type="modified residue" description="Phosphoserine" evidence="15">
    <location>
        <position position="23"/>
    </location>
</feature>
<feature type="modified residue" description="Phosphoserine" evidence="15">
    <location>
        <position position="129"/>
    </location>
</feature>
<feature type="modified residue" description="Phosphoserine" evidence="15">
    <location>
        <position position="130"/>
    </location>
</feature>
<feature type="mutagenesis site" description="Increased sensitivity toward ionizing radiation." evidence="12">
    <original>KT</original>
    <variation>AA</variation>
    <location>
        <begin position="538"/>
        <end position="539"/>
    </location>
</feature>
<feature type="mutagenesis site" description="Abolishes interaction with UBC13." evidence="5 9">
    <original>C</original>
    <variation>S</variation>
    <location>
        <position position="914"/>
    </location>
</feature>
<feature type="mutagenesis site" description="Abolishes interaction with UBC13." evidence="9">
    <original>I</original>
    <variation>A</variation>
    <location>
        <position position="916"/>
    </location>
</feature>
<feature type="mutagenesis site" description="Abolishes interaction with UBC13." evidence="9">
    <original>Y</original>
    <variation>A</variation>
    <location>
        <position position="944"/>
    </location>
</feature>
<feature type="mutagenesis site" description="Abolishes interaction with UBC13." evidence="9">
    <original>N</original>
    <variation>A</variation>
    <location>
        <position position="959"/>
    </location>
</feature>
<feature type="sequence conflict" description="In Ref. 4; AAB23590." evidence="14" ref="4">
    <original>Q</original>
    <variation>R</variation>
    <location>
        <position position="478"/>
    </location>
</feature>
<feature type="sequence conflict" description="In Ref. 4; AAB23590." evidence="14" ref="4">
    <original>T</original>
    <variation>N</variation>
    <location>
        <position position="635"/>
    </location>
</feature>
<feature type="sequence conflict" description="In Ref. 4; AAB23590." evidence="14" ref="4">
    <original>G</original>
    <variation>S</variation>
    <location>
        <position position="846"/>
    </location>
</feature>
<feature type="sequence conflict" description="In Ref. 4; AAB23590." evidence="14" ref="4">
    <original>R</original>
    <variation>S</variation>
    <location>
        <position position="898"/>
    </location>
</feature>
<feature type="sequence conflict" description="In Ref. 4; AAB23590." evidence="14" ref="4">
    <original>V</original>
    <variation>A</variation>
    <location>
        <position position="973"/>
    </location>
</feature>
<feature type="sequence conflict" description="In Ref. 4; AAB23590." evidence="14" ref="4">
    <original>A</original>
    <variation>R</variation>
    <location>
        <position position="1063"/>
    </location>
</feature>
<feature type="strand" evidence="17">
    <location>
        <begin position="5"/>
        <end position="8"/>
    </location>
</feature>
<gene>
    <name type="primary">RAD5</name>
    <name type="synonym">REV2</name>
    <name type="synonym">SNM2</name>
    <name type="ordered locus">YLR032W</name>
</gene>
<proteinExistence type="evidence at protein level"/>
<organism>
    <name type="scientific">Saccharomyces cerevisiae (strain ATCC 204508 / S288c)</name>
    <name type="common">Baker's yeast</name>
    <dbReference type="NCBI Taxonomy" id="559292"/>
    <lineage>
        <taxon>Eukaryota</taxon>
        <taxon>Fungi</taxon>
        <taxon>Dikarya</taxon>
        <taxon>Ascomycota</taxon>
        <taxon>Saccharomycotina</taxon>
        <taxon>Saccharomycetes</taxon>
        <taxon>Saccharomycetales</taxon>
        <taxon>Saccharomycetaceae</taxon>
        <taxon>Saccharomyces</taxon>
    </lineage>
</organism>
<protein>
    <recommendedName>
        <fullName>DNA repair protein RAD5</fullName>
        <ecNumber>3.6.4.-</ecNumber>
    </recommendedName>
    <alternativeName>
        <fullName>Radiation sensitivity protein 5</fullName>
    </alternativeName>
    <alternativeName>
        <fullName>Revertibility protein 2</fullName>
    </alternativeName>
</protein>